<gene>
    <name type="ordered locus">At3g17490</name>
    <name type="ORF">MKP6.4</name>
</gene>
<feature type="chain" id="PRO_0000283423" description="Putative F-box protein At3g17490">
    <location>
        <begin position="1"/>
        <end position="388"/>
    </location>
</feature>
<feature type="domain" description="F-box" evidence="1">
    <location>
        <begin position="1"/>
        <end position="46"/>
    </location>
</feature>
<reference key="1">
    <citation type="journal article" date="2000" name="DNA Res.">
        <title>Structural analysis of Arabidopsis thaliana chromosome 3. I. Sequence features of the regions of 4,504,864 bp covered by sixty P1 and TAC clones.</title>
        <authorList>
            <person name="Sato S."/>
            <person name="Nakamura Y."/>
            <person name="Kaneko T."/>
            <person name="Katoh T."/>
            <person name="Asamizu E."/>
            <person name="Tabata S."/>
        </authorList>
    </citation>
    <scope>NUCLEOTIDE SEQUENCE [LARGE SCALE GENOMIC DNA]</scope>
    <source>
        <strain>cv. Columbia</strain>
    </source>
</reference>
<reference key="2">
    <citation type="journal article" date="2017" name="Plant J.">
        <title>Araport11: a complete reannotation of the Arabidopsis thaliana reference genome.</title>
        <authorList>
            <person name="Cheng C.Y."/>
            <person name="Krishnakumar V."/>
            <person name="Chan A.P."/>
            <person name="Thibaud-Nissen F."/>
            <person name="Schobel S."/>
            <person name="Town C.D."/>
        </authorList>
    </citation>
    <scope>GENOME REANNOTATION</scope>
    <source>
        <strain>cv. Columbia</strain>
    </source>
</reference>
<accession>Q9LUP8</accession>
<proteinExistence type="predicted"/>
<name>FB153_ARATH</name>
<dbReference type="EMBL" id="AB022219">
    <property type="protein sequence ID" value="BAB02038.1"/>
    <property type="molecule type" value="Genomic_DNA"/>
</dbReference>
<dbReference type="EMBL" id="CP002686">
    <property type="protein sequence ID" value="AEE75960.1"/>
    <property type="molecule type" value="Genomic_DNA"/>
</dbReference>
<dbReference type="RefSeq" id="NP_188376.1">
    <property type="nucleotide sequence ID" value="NM_112629.1"/>
</dbReference>
<dbReference type="BioGRID" id="6347">
    <property type="interactions" value="3"/>
</dbReference>
<dbReference type="FunCoup" id="Q9LUP8">
    <property type="interactions" value="19"/>
</dbReference>
<dbReference type="STRING" id="3702.Q9LUP8"/>
<dbReference type="PaxDb" id="3702-AT3G17490.1"/>
<dbReference type="EnsemblPlants" id="AT3G17490.1">
    <property type="protein sequence ID" value="AT3G17490.1"/>
    <property type="gene ID" value="AT3G17490"/>
</dbReference>
<dbReference type="GeneID" id="821014"/>
<dbReference type="Gramene" id="AT3G17490.1">
    <property type="protein sequence ID" value="AT3G17490.1"/>
    <property type="gene ID" value="AT3G17490"/>
</dbReference>
<dbReference type="KEGG" id="ath:AT3G17490"/>
<dbReference type="Araport" id="AT3G17490"/>
<dbReference type="TAIR" id="AT3G17490"/>
<dbReference type="HOGENOM" id="CLU_034692_0_0_1"/>
<dbReference type="InParanoid" id="Q9LUP8"/>
<dbReference type="OMA" id="HRENTYK"/>
<dbReference type="PhylomeDB" id="Q9LUP8"/>
<dbReference type="PRO" id="PR:Q9LUP8"/>
<dbReference type="Proteomes" id="UP000006548">
    <property type="component" value="Chromosome 3"/>
</dbReference>
<dbReference type="ExpressionAtlas" id="Q9LUP8">
    <property type="expression patterns" value="differential"/>
</dbReference>
<dbReference type="CDD" id="cd22157">
    <property type="entry name" value="F-box_AtFBW1-like"/>
    <property type="match status" value="1"/>
</dbReference>
<dbReference type="Gene3D" id="1.20.1280.50">
    <property type="match status" value="1"/>
</dbReference>
<dbReference type="InterPro" id="IPR006527">
    <property type="entry name" value="F-box-assoc_dom_typ1"/>
</dbReference>
<dbReference type="InterPro" id="IPR017451">
    <property type="entry name" value="F-box-assoc_interact_dom"/>
</dbReference>
<dbReference type="InterPro" id="IPR036047">
    <property type="entry name" value="F-box-like_dom_sf"/>
</dbReference>
<dbReference type="InterPro" id="IPR001810">
    <property type="entry name" value="F-box_dom"/>
</dbReference>
<dbReference type="InterPro" id="IPR011043">
    <property type="entry name" value="Gal_Oxase/kelch_b-propeller"/>
</dbReference>
<dbReference type="InterPro" id="IPR050796">
    <property type="entry name" value="SCF_F-box_component"/>
</dbReference>
<dbReference type="NCBIfam" id="TIGR01640">
    <property type="entry name" value="F_box_assoc_1"/>
    <property type="match status" value="1"/>
</dbReference>
<dbReference type="PANTHER" id="PTHR31672">
    <property type="entry name" value="BNACNNG10540D PROTEIN"/>
    <property type="match status" value="1"/>
</dbReference>
<dbReference type="PANTHER" id="PTHR31672:SF13">
    <property type="entry name" value="F-BOX PROTEIN CPR30-LIKE"/>
    <property type="match status" value="1"/>
</dbReference>
<dbReference type="Pfam" id="PF00646">
    <property type="entry name" value="F-box"/>
    <property type="match status" value="1"/>
</dbReference>
<dbReference type="Pfam" id="PF07734">
    <property type="entry name" value="FBA_1"/>
    <property type="match status" value="1"/>
</dbReference>
<dbReference type="SMART" id="SM00256">
    <property type="entry name" value="FBOX"/>
    <property type="match status" value="1"/>
</dbReference>
<dbReference type="SUPFAM" id="SSF81383">
    <property type="entry name" value="F-box domain"/>
    <property type="match status" value="1"/>
</dbReference>
<dbReference type="SUPFAM" id="SSF50965">
    <property type="entry name" value="Galactose oxidase, central domain"/>
    <property type="match status" value="1"/>
</dbReference>
<dbReference type="PROSITE" id="PS50181">
    <property type="entry name" value="FBOX"/>
    <property type="match status" value="1"/>
</dbReference>
<protein>
    <recommendedName>
        <fullName>Putative F-box protein At3g17490</fullName>
    </recommendedName>
</protein>
<evidence type="ECO:0000255" key="1">
    <source>
        <dbReference type="PROSITE-ProRule" id="PRU00080"/>
    </source>
</evidence>
<keyword id="KW-1185">Reference proteome</keyword>
<organism>
    <name type="scientific">Arabidopsis thaliana</name>
    <name type="common">Mouse-ear cress</name>
    <dbReference type="NCBI Taxonomy" id="3702"/>
    <lineage>
        <taxon>Eukaryota</taxon>
        <taxon>Viridiplantae</taxon>
        <taxon>Streptophyta</taxon>
        <taxon>Embryophyta</taxon>
        <taxon>Tracheophyta</taxon>
        <taxon>Spermatophyta</taxon>
        <taxon>Magnoliopsida</taxon>
        <taxon>eudicotyledons</taxon>
        <taxon>Gunneridae</taxon>
        <taxon>Pentapetalae</taxon>
        <taxon>rosids</taxon>
        <taxon>malvids</taxon>
        <taxon>Brassicales</taxon>
        <taxon>Brassicaceae</taxon>
        <taxon>Camelineae</taxon>
        <taxon>Arabidopsis</taxon>
    </lineage>
</organism>
<sequence length="388" mass="46170">MMMPHLSEDLVEEILSRVPAISLKRLRYTCKQWNALFNDQRFSKKHRDKAPKTYLGLTLKDFRIYSMSSNLHGLLHNNNIDLLMEFKGKLSSLNDLNDFEISQIYPCDGLILCSTKRNTRLVVWNPCTGQTRWIKRRNRRMCDTFAFGYDNSKSSCLNNYKILRVCEKIKGQQFEYEIFEFSSNSWRVLDVNPNCIIEGRSVSVKGNSYWFATITKTHYFIRRFDFSSETFQKLPLPFHIFDYNDSRALSAFREEQLSVLHQSFDTEKMDIWVTNKIDETTDWSWSKFFTVRLINRLDYPISMMMKSPLSFFIDEKKNIILCYDKHRENTYKSLVLIVGKDKVYREFYFPESYELGRTYLCNYVPSLVQIKQSGLISTRKRKRKDFSS</sequence>